<name>CNN3_RAT</name>
<protein>
    <recommendedName>
        <fullName>Calponin-3</fullName>
    </recommendedName>
    <alternativeName>
        <fullName>Calponin, acidic isoform</fullName>
    </alternativeName>
    <alternativeName>
        <fullName>Calponin, non-muscle isoform</fullName>
    </alternativeName>
</protein>
<keyword id="KW-0007">Acetylation</keyword>
<keyword id="KW-0009">Actin-binding</keyword>
<keyword id="KW-0112">Calmodulin-binding</keyword>
<keyword id="KW-0903">Direct protein sequencing</keyword>
<keyword id="KW-0488">Methylation</keyword>
<keyword id="KW-1185">Reference proteome</keyword>
<keyword id="KW-0677">Repeat</keyword>
<proteinExistence type="evidence at protein level"/>
<organism>
    <name type="scientific">Rattus norvegicus</name>
    <name type="common">Rat</name>
    <dbReference type="NCBI Taxonomy" id="10116"/>
    <lineage>
        <taxon>Eukaryota</taxon>
        <taxon>Metazoa</taxon>
        <taxon>Chordata</taxon>
        <taxon>Craniata</taxon>
        <taxon>Vertebrata</taxon>
        <taxon>Euteleostomi</taxon>
        <taxon>Mammalia</taxon>
        <taxon>Eutheria</taxon>
        <taxon>Euarchontoglires</taxon>
        <taxon>Glires</taxon>
        <taxon>Rodentia</taxon>
        <taxon>Myomorpha</taxon>
        <taxon>Muroidea</taxon>
        <taxon>Muridae</taxon>
        <taxon>Murinae</taxon>
        <taxon>Rattus</taxon>
    </lineage>
</organism>
<evidence type="ECO:0000250" key="1">
    <source>
        <dbReference type="UniProtKB" id="Q15417"/>
    </source>
</evidence>
<evidence type="ECO:0000250" key="2">
    <source>
        <dbReference type="UniProtKB" id="Q9DAW9"/>
    </source>
</evidence>
<evidence type="ECO:0000255" key="3">
    <source>
        <dbReference type="PROSITE-ProRule" id="PRU00044"/>
    </source>
</evidence>
<evidence type="ECO:0000256" key="4">
    <source>
        <dbReference type="SAM" id="MobiDB-lite"/>
    </source>
</evidence>
<evidence type="ECO:0000305" key="5"/>
<sequence>MTHFNKGPSYGLSAEVKNKIASKYDQQAEEDLRNWIEEVTGMGIGTNFQLGLKDGIILCELINKLQPGSVKKVNESSLNWPQLENIGNFIKAIQAYGMKPHDIFEANDLFENGNMTQVQTTLVALAGLAKTKGFHTTIDIGVKYAEKQTRRFDEGKLKAGQSVIGLQMGTNKCASQAGMTAYGTRRHLYDPKMQTDKPFDQTTISLQMGTNKGASQAGMSAPGTRRDIYDQKLTLQPVDNSTISLQMGTNKVASQKGMSVYGLGRQVYDPKYCAAPTEPVIHNGSQGTGTNGSEISDSDYQAEYPDEYHGEYPDEYPREYQYGDDQGIDY</sequence>
<feature type="chain" id="PRO_0000204778" description="Calponin-3">
    <location>
        <begin position="1"/>
        <end position="330"/>
    </location>
</feature>
<feature type="domain" description="Calponin-homology (CH)" evidence="3">
    <location>
        <begin position="26"/>
        <end position="130"/>
    </location>
</feature>
<feature type="repeat" description="Calponin-like 1">
    <location>
        <begin position="164"/>
        <end position="189"/>
    </location>
</feature>
<feature type="repeat" description="Calponin-like 2">
    <location>
        <begin position="204"/>
        <end position="229"/>
    </location>
</feature>
<feature type="repeat" description="Calponin-like 3">
    <location>
        <begin position="243"/>
        <end position="268"/>
    </location>
</feature>
<feature type="region of interest" description="Disordered" evidence="4">
    <location>
        <begin position="279"/>
        <end position="330"/>
    </location>
</feature>
<feature type="compositionally biased region" description="Basic and acidic residues" evidence="4">
    <location>
        <begin position="306"/>
        <end position="318"/>
    </location>
</feature>
<feature type="modified residue" description="N6-acetyllysine" evidence="2">
    <location>
        <position position="23"/>
    </location>
</feature>
<feature type="modified residue" description="N6-methyllysine" evidence="1">
    <location>
        <position position="158"/>
    </location>
</feature>
<comment type="function">
    <text>Thin filament-associated protein that is implicated in the regulation and modulation of smooth muscle contraction. It is capable of binding to actin, calmodulin and tropomyosin. The interaction of calponin with actin inhibits the actomyosin Mg-ATPase activity.</text>
</comment>
<comment type="similarity">
    <text evidence="5">Belongs to the calponin family.</text>
</comment>
<accession>P37397</accession>
<dbReference type="EMBL" id="U06755">
    <property type="protein sequence ID" value="AAA18590.1"/>
    <property type="molecule type" value="mRNA"/>
</dbReference>
<dbReference type="EMBL" id="BC062020">
    <property type="protein sequence ID" value="AAH62020.1"/>
    <property type="molecule type" value="mRNA"/>
</dbReference>
<dbReference type="PIR" id="A53742">
    <property type="entry name" value="A53742"/>
</dbReference>
<dbReference type="RefSeq" id="NP_062232.1">
    <property type="nucleotide sequence ID" value="NM_019359.2"/>
</dbReference>
<dbReference type="SMR" id="P37397"/>
<dbReference type="BioGRID" id="248537">
    <property type="interactions" value="3"/>
</dbReference>
<dbReference type="FunCoup" id="P37397">
    <property type="interactions" value="1420"/>
</dbReference>
<dbReference type="IntAct" id="P37397">
    <property type="interactions" value="1"/>
</dbReference>
<dbReference type="STRING" id="10116.ENSRNOP00000015579"/>
<dbReference type="iPTMnet" id="P37397"/>
<dbReference type="PhosphoSitePlus" id="P37397"/>
<dbReference type="jPOST" id="P37397"/>
<dbReference type="PaxDb" id="10116-ENSRNOP00000015579"/>
<dbReference type="Ensembl" id="ENSRNOT00000119824.1">
    <property type="protein sequence ID" value="ENSRNOP00000092181.1"/>
    <property type="gene ID" value="ENSRNOG00000011559.8"/>
</dbReference>
<dbReference type="GeneID" id="54321"/>
<dbReference type="KEGG" id="rno:54321"/>
<dbReference type="UCSC" id="RGD:71044">
    <property type="organism name" value="rat"/>
</dbReference>
<dbReference type="AGR" id="RGD:71044"/>
<dbReference type="CTD" id="1266"/>
<dbReference type="RGD" id="71044">
    <property type="gene designation" value="Cnn3"/>
</dbReference>
<dbReference type="eggNOG" id="KOG2046">
    <property type="taxonomic scope" value="Eukaryota"/>
</dbReference>
<dbReference type="GeneTree" id="ENSGT00940000154539"/>
<dbReference type="HOGENOM" id="CLU_055232_0_1_1"/>
<dbReference type="InParanoid" id="P37397"/>
<dbReference type="OMA" id="YHSEYQD"/>
<dbReference type="PhylomeDB" id="P37397"/>
<dbReference type="TreeFam" id="TF313921"/>
<dbReference type="PRO" id="PR:P37397"/>
<dbReference type="Proteomes" id="UP000002494">
    <property type="component" value="Chromosome 2"/>
</dbReference>
<dbReference type="Bgee" id="ENSRNOG00000011559">
    <property type="expression patterns" value="Expressed in stomach and 20 other cell types or tissues"/>
</dbReference>
<dbReference type="GO" id="GO:0015629">
    <property type="term" value="C:actin cytoskeleton"/>
    <property type="evidence" value="ECO:0000318"/>
    <property type="project" value="GO_Central"/>
</dbReference>
<dbReference type="GO" id="GO:0005884">
    <property type="term" value="C:actin filament"/>
    <property type="evidence" value="ECO:0000304"/>
    <property type="project" value="RGD"/>
</dbReference>
<dbReference type="GO" id="GO:0030425">
    <property type="term" value="C:dendrite"/>
    <property type="evidence" value="ECO:0000314"/>
    <property type="project" value="RGD"/>
</dbReference>
<dbReference type="GO" id="GO:0043197">
    <property type="term" value="C:dendritic spine"/>
    <property type="evidence" value="ECO:0000314"/>
    <property type="project" value="RGD"/>
</dbReference>
<dbReference type="GO" id="GO:0098978">
    <property type="term" value="C:glutamatergic synapse"/>
    <property type="evidence" value="ECO:0000314"/>
    <property type="project" value="SynGO"/>
</dbReference>
<dbReference type="GO" id="GO:0005874">
    <property type="term" value="C:microtubule"/>
    <property type="evidence" value="ECO:0000304"/>
    <property type="project" value="RGD"/>
</dbReference>
<dbReference type="GO" id="GO:0043025">
    <property type="term" value="C:neuronal cell body"/>
    <property type="evidence" value="ECO:0000314"/>
    <property type="project" value="RGD"/>
</dbReference>
<dbReference type="GO" id="GO:0098794">
    <property type="term" value="C:postsynapse"/>
    <property type="evidence" value="ECO:0000314"/>
    <property type="project" value="SynGO"/>
</dbReference>
<dbReference type="GO" id="GO:0051015">
    <property type="term" value="F:actin filament binding"/>
    <property type="evidence" value="ECO:0000318"/>
    <property type="project" value="GO_Central"/>
</dbReference>
<dbReference type="GO" id="GO:0005516">
    <property type="term" value="F:calmodulin binding"/>
    <property type="evidence" value="ECO:0007669"/>
    <property type="project" value="UniProtKB-KW"/>
</dbReference>
<dbReference type="GO" id="GO:0008017">
    <property type="term" value="F:microtubule binding"/>
    <property type="evidence" value="ECO:0000314"/>
    <property type="project" value="RGD"/>
</dbReference>
<dbReference type="GO" id="GO:0030674">
    <property type="term" value="F:protein-macromolecule adaptor activity"/>
    <property type="evidence" value="ECO:0000303"/>
    <property type="project" value="RGD"/>
</dbReference>
<dbReference type="GO" id="GO:0007015">
    <property type="term" value="P:actin filament organization"/>
    <property type="evidence" value="ECO:0000318"/>
    <property type="project" value="GO_Central"/>
</dbReference>
<dbReference type="GO" id="GO:0031032">
    <property type="term" value="P:actomyosin structure organization"/>
    <property type="evidence" value="ECO:0007669"/>
    <property type="project" value="InterPro"/>
</dbReference>
<dbReference type="GO" id="GO:0030855">
    <property type="term" value="P:epithelial cell differentiation"/>
    <property type="evidence" value="ECO:0000266"/>
    <property type="project" value="RGD"/>
</dbReference>
<dbReference type="CDD" id="cd21284">
    <property type="entry name" value="CH_CNN3"/>
    <property type="match status" value="1"/>
</dbReference>
<dbReference type="FunFam" id="1.10.418.10:FF:000040">
    <property type="entry name" value="Calponin"/>
    <property type="match status" value="1"/>
</dbReference>
<dbReference type="Gene3D" id="1.10.418.10">
    <property type="entry name" value="Calponin-like domain"/>
    <property type="match status" value="1"/>
</dbReference>
<dbReference type="InterPro" id="IPR050606">
    <property type="entry name" value="Calponin-like"/>
</dbReference>
<dbReference type="InterPro" id="IPR001997">
    <property type="entry name" value="Calponin/LIMCH1"/>
</dbReference>
<dbReference type="InterPro" id="IPR000557">
    <property type="entry name" value="Calponin_repeat"/>
</dbReference>
<dbReference type="InterPro" id="IPR001715">
    <property type="entry name" value="CH_dom"/>
</dbReference>
<dbReference type="InterPro" id="IPR036872">
    <property type="entry name" value="CH_dom_sf"/>
</dbReference>
<dbReference type="InterPro" id="IPR003096">
    <property type="entry name" value="SM22_calponin"/>
</dbReference>
<dbReference type="PANTHER" id="PTHR47385">
    <property type="entry name" value="CALPONIN"/>
    <property type="match status" value="1"/>
</dbReference>
<dbReference type="PANTHER" id="PTHR47385:SF24">
    <property type="entry name" value="MUSCLE-SPECIFIC PROTEIN 20"/>
    <property type="match status" value="1"/>
</dbReference>
<dbReference type="Pfam" id="PF00402">
    <property type="entry name" value="Calponin"/>
    <property type="match status" value="3"/>
</dbReference>
<dbReference type="Pfam" id="PF00307">
    <property type="entry name" value="CH"/>
    <property type="match status" value="1"/>
</dbReference>
<dbReference type="PRINTS" id="PR00889">
    <property type="entry name" value="CALPONIN"/>
</dbReference>
<dbReference type="PRINTS" id="PR00888">
    <property type="entry name" value="SM22CALPONIN"/>
</dbReference>
<dbReference type="SMART" id="SM00033">
    <property type="entry name" value="CH"/>
    <property type="match status" value="1"/>
</dbReference>
<dbReference type="SUPFAM" id="SSF47576">
    <property type="entry name" value="Calponin-homology domain, CH-domain"/>
    <property type="match status" value="1"/>
</dbReference>
<dbReference type="PROSITE" id="PS01052">
    <property type="entry name" value="CALPONIN_1"/>
    <property type="match status" value="3"/>
</dbReference>
<dbReference type="PROSITE" id="PS51122">
    <property type="entry name" value="CALPONIN_2"/>
    <property type="match status" value="3"/>
</dbReference>
<dbReference type="PROSITE" id="PS50021">
    <property type="entry name" value="CH"/>
    <property type="match status" value="1"/>
</dbReference>
<gene>
    <name type="primary">Cnn3</name>
</gene>
<reference key="1">
    <citation type="journal article" date="1994" name="J. Biol. Chem.">
        <title>Cloning and expression of a novel acidic calponin isoform from rat aortic vascular smooth muscle.</title>
        <authorList>
            <person name="Applegate D.E."/>
            <person name="Feng W."/>
            <person name="Green R.S."/>
            <person name="Taubman M.B."/>
        </authorList>
    </citation>
    <scope>NUCLEOTIDE SEQUENCE [MRNA]</scope>
    <source>
        <strain>Sprague-Dawley</strain>
        <tissue>Vascular smooth muscle</tissue>
    </source>
</reference>
<reference key="2">
    <citation type="journal article" date="2004" name="Genome Res.">
        <title>The status, quality, and expansion of the NIH full-length cDNA project: the Mammalian Gene Collection (MGC).</title>
        <authorList>
            <consortium name="The MGC Project Team"/>
        </authorList>
    </citation>
    <scope>NUCLEOTIDE SEQUENCE [LARGE SCALE MRNA]</scope>
    <source>
        <tissue>Prostate</tissue>
    </source>
</reference>
<reference key="3">
    <citation type="submission" date="2007-04" db="UniProtKB">
        <authorList>
            <person name="Lubec G."/>
            <person name="Diao W."/>
        </authorList>
    </citation>
    <scope>PROTEIN SEQUENCE OF 54-64</scope>
    <scope>IDENTIFICATION BY MASS SPECTROMETRY</scope>
    <source>
        <strain>Sprague-Dawley</strain>
        <tissue>Hippocampus</tissue>
    </source>
</reference>